<protein>
    <recommendedName>
        <fullName evidence="1">NAD(P)H-quinone oxidoreductase subunit K, chloroplastic</fullName>
        <ecNumber evidence="1">7.1.1.-</ecNumber>
    </recommendedName>
    <alternativeName>
        <fullName evidence="1">NAD(P)H dehydrogenase subunit K</fullName>
    </alternativeName>
    <alternativeName>
        <fullName evidence="1">NADH-plastoquinone oxidoreductase subunit K</fullName>
    </alternativeName>
</protein>
<comment type="function">
    <text evidence="1">NDH shuttles electrons from NAD(P)H:plastoquinone, via FMN and iron-sulfur (Fe-S) centers, to quinones in the photosynthetic chain and possibly in a chloroplast respiratory chain. The immediate electron acceptor for the enzyme in this species is believed to be plastoquinone. Couples the redox reaction to proton translocation, and thus conserves the redox energy in a proton gradient.</text>
</comment>
<comment type="catalytic activity">
    <reaction evidence="1">
        <text>a plastoquinone + NADH + (n+1) H(+)(in) = a plastoquinol + NAD(+) + n H(+)(out)</text>
        <dbReference type="Rhea" id="RHEA:42608"/>
        <dbReference type="Rhea" id="RHEA-COMP:9561"/>
        <dbReference type="Rhea" id="RHEA-COMP:9562"/>
        <dbReference type="ChEBI" id="CHEBI:15378"/>
        <dbReference type="ChEBI" id="CHEBI:17757"/>
        <dbReference type="ChEBI" id="CHEBI:57540"/>
        <dbReference type="ChEBI" id="CHEBI:57945"/>
        <dbReference type="ChEBI" id="CHEBI:62192"/>
    </reaction>
</comment>
<comment type="catalytic activity">
    <reaction evidence="1">
        <text>a plastoquinone + NADPH + (n+1) H(+)(in) = a plastoquinol + NADP(+) + n H(+)(out)</text>
        <dbReference type="Rhea" id="RHEA:42612"/>
        <dbReference type="Rhea" id="RHEA-COMP:9561"/>
        <dbReference type="Rhea" id="RHEA-COMP:9562"/>
        <dbReference type="ChEBI" id="CHEBI:15378"/>
        <dbReference type="ChEBI" id="CHEBI:17757"/>
        <dbReference type="ChEBI" id="CHEBI:57783"/>
        <dbReference type="ChEBI" id="CHEBI:58349"/>
        <dbReference type="ChEBI" id="CHEBI:62192"/>
    </reaction>
</comment>
<comment type="cofactor">
    <cofactor evidence="1">
        <name>[4Fe-4S] cluster</name>
        <dbReference type="ChEBI" id="CHEBI:49883"/>
    </cofactor>
    <text evidence="1">Binds 1 [4Fe-4S] cluster.</text>
</comment>
<comment type="subunit">
    <text evidence="1">NDH is composed of at least 16 different subunits, 5 of which are encoded in the nucleus.</text>
</comment>
<comment type="subcellular location">
    <subcellularLocation>
        <location evidence="1">Plastid</location>
        <location evidence="1">Chloroplast thylakoid membrane</location>
        <topology evidence="1">Peripheral membrane protein</topology>
        <orientation evidence="1">Stromal side</orientation>
    </subcellularLocation>
</comment>
<comment type="RNA editing">
    <location>
        <position position="3" evidence="2 3"/>
    </location>
    <location>
        <position position="35" evidence="2 3"/>
    </location>
    <location>
        <position position="117" evidence="2 3"/>
    </location>
    <location>
        <position position="128" evidence="2 3"/>
    </location>
    <location>
        <position position="133" evidence="2 3"/>
    </location>
</comment>
<comment type="similarity">
    <text evidence="1">Belongs to the complex I 20 kDa subunit family.</text>
</comment>
<accession>Q31791</accession>
<accession>Q85UU2</accession>
<dbReference type="EC" id="7.1.1.-" evidence="1"/>
<dbReference type="EMBL" id="AB086179">
    <property type="protein sequence ID" value="BAC55353.2"/>
    <property type="molecule type" value="Genomic_DNA"/>
</dbReference>
<dbReference type="EMBL" id="AB087445">
    <property type="protein sequence ID" value="BAC55447.1"/>
    <property type="status" value="ALT_SEQ"/>
    <property type="molecule type" value="mRNA"/>
</dbReference>
<dbReference type="EMBL" id="D43695">
    <property type="protein sequence ID" value="BAA07792.1"/>
    <property type="status" value="ALT_SEQ"/>
    <property type="molecule type" value="Genomic_DNA"/>
</dbReference>
<dbReference type="EMBL" id="AB087446">
    <property type="protein sequence ID" value="BAC55448.1"/>
    <property type="molecule type" value="mRNA"/>
</dbReference>
<dbReference type="PIR" id="S71143">
    <property type="entry name" value="S71143"/>
</dbReference>
<dbReference type="RefSeq" id="NP_777417.3">
    <property type="nucleotide sequence ID" value="NC_004543.1"/>
</dbReference>
<dbReference type="SMR" id="Q31791"/>
<dbReference type="GeneID" id="2553504"/>
<dbReference type="GO" id="GO:0009535">
    <property type="term" value="C:chloroplast thylakoid membrane"/>
    <property type="evidence" value="ECO:0007669"/>
    <property type="project" value="UniProtKB-SubCell"/>
</dbReference>
<dbReference type="GO" id="GO:0045271">
    <property type="term" value="C:respiratory chain complex I"/>
    <property type="evidence" value="ECO:0007669"/>
    <property type="project" value="TreeGrafter"/>
</dbReference>
<dbReference type="GO" id="GO:0051539">
    <property type="term" value="F:4 iron, 4 sulfur cluster binding"/>
    <property type="evidence" value="ECO:0007669"/>
    <property type="project" value="UniProtKB-KW"/>
</dbReference>
<dbReference type="GO" id="GO:0005506">
    <property type="term" value="F:iron ion binding"/>
    <property type="evidence" value="ECO:0007669"/>
    <property type="project" value="UniProtKB-UniRule"/>
</dbReference>
<dbReference type="GO" id="GO:0008137">
    <property type="term" value="F:NADH dehydrogenase (ubiquinone) activity"/>
    <property type="evidence" value="ECO:0007669"/>
    <property type="project" value="InterPro"/>
</dbReference>
<dbReference type="GO" id="GO:0048038">
    <property type="term" value="F:quinone binding"/>
    <property type="evidence" value="ECO:0007669"/>
    <property type="project" value="UniProtKB-KW"/>
</dbReference>
<dbReference type="GO" id="GO:0009060">
    <property type="term" value="P:aerobic respiration"/>
    <property type="evidence" value="ECO:0007669"/>
    <property type="project" value="TreeGrafter"/>
</dbReference>
<dbReference type="GO" id="GO:0015990">
    <property type="term" value="P:electron transport coupled proton transport"/>
    <property type="evidence" value="ECO:0007669"/>
    <property type="project" value="TreeGrafter"/>
</dbReference>
<dbReference type="GO" id="GO:0019684">
    <property type="term" value="P:photosynthesis, light reaction"/>
    <property type="evidence" value="ECO:0007669"/>
    <property type="project" value="UniProtKB-UniRule"/>
</dbReference>
<dbReference type="FunFam" id="3.40.50.12280:FF:000003">
    <property type="entry name" value="NAD(P)H-quinone oxidoreductase subunit K, chloroplastic"/>
    <property type="match status" value="1"/>
</dbReference>
<dbReference type="Gene3D" id="3.40.50.12280">
    <property type="match status" value="1"/>
</dbReference>
<dbReference type="HAMAP" id="MF_01356">
    <property type="entry name" value="NDH1_NuoB"/>
    <property type="match status" value="1"/>
</dbReference>
<dbReference type="InterPro" id="IPR006137">
    <property type="entry name" value="NADH_UbQ_OxRdtase-like_20kDa"/>
</dbReference>
<dbReference type="InterPro" id="IPR006138">
    <property type="entry name" value="NADH_UQ_OxRdtase_20Kd_su"/>
</dbReference>
<dbReference type="NCBIfam" id="TIGR01957">
    <property type="entry name" value="nuoB_fam"/>
    <property type="match status" value="1"/>
</dbReference>
<dbReference type="NCBIfam" id="NF005012">
    <property type="entry name" value="PRK06411.1"/>
    <property type="match status" value="1"/>
</dbReference>
<dbReference type="PANTHER" id="PTHR11995">
    <property type="entry name" value="NADH DEHYDROGENASE"/>
    <property type="match status" value="1"/>
</dbReference>
<dbReference type="PANTHER" id="PTHR11995:SF14">
    <property type="entry name" value="NADH DEHYDROGENASE [UBIQUINONE] IRON-SULFUR PROTEIN 7, MITOCHONDRIAL"/>
    <property type="match status" value="1"/>
</dbReference>
<dbReference type="Pfam" id="PF01058">
    <property type="entry name" value="Oxidored_q6"/>
    <property type="match status" value="1"/>
</dbReference>
<dbReference type="SUPFAM" id="SSF56770">
    <property type="entry name" value="HydA/Nqo6-like"/>
    <property type="match status" value="1"/>
</dbReference>
<dbReference type="PROSITE" id="PS01150">
    <property type="entry name" value="COMPLEX1_20K"/>
    <property type="match status" value="1"/>
</dbReference>
<sequence>MVLVPKYLNFESDLAESVTNSMDSSLPDETTSDSIILTTFNDFSNWARLSSLWPLLYGTSCCFIEFASLIGSRFDFDRYGLVPRSSPRQADLIITAGTVTMKMAPSLVRLYEQMPEPKYVIAMGACTITGGMFSTDSYSTVRGVDKLIPVDIYLPGCPPKPEAIIDAIIKLRKGVAREVHERKDKLRQTRRYFTLNHQLEIVPIIHTGKYDEHLFSKFSEISIEPKLNVSPQRIEKSKSSISSQISF</sequence>
<evidence type="ECO:0000255" key="1">
    <source>
        <dbReference type="HAMAP-Rule" id="MF_01356"/>
    </source>
</evidence>
<evidence type="ECO:0000269" key="2">
    <source>
    </source>
</evidence>
<evidence type="ECO:0000269" key="3">
    <source>
    </source>
</evidence>
<gene>
    <name evidence="1" type="primary">ndhK</name>
</gene>
<keyword id="KW-0004">4Fe-4S</keyword>
<keyword id="KW-0150">Chloroplast</keyword>
<keyword id="KW-0408">Iron</keyword>
<keyword id="KW-0411">Iron-sulfur</keyword>
<keyword id="KW-0472">Membrane</keyword>
<keyword id="KW-0479">Metal-binding</keyword>
<keyword id="KW-0520">NAD</keyword>
<keyword id="KW-0521">NADP</keyword>
<keyword id="KW-0934">Plastid</keyword>
<keyword id="KW-0618">Plastoquinone</keyword>
<keyword id="KW-0874">Quinone</keyword>
<keyword id="KW-0691">RNA editing</keyword>
<keyword id="KW-0793">Thylakoid</keyword>
<keyword id="KW-1278">Translocase</keyword>
<keyword id="KW-0813">Transport</keyword>
<name>NDHK_ANTAG</name>
<geneLocation type="chloroplast"/>
<feature type="chain" id="PRO_0000118742" description="NAD(P)H-quinone oxidoreductase subunit K, chloroplastic">
    <location>
        <begin position="1"/>
        <end position="247"/>
    </location>
</feature>
<feature type="binding site" evidence="1">
    <location>
        <position position="61"/>
    </location>
    <ligand>
        <name>[4Fe-4S] cluster</name>
        <dbReference type="ChEBI" id="CHEBI:49883"/>
    </ligand>
</feature>
<feature type="binding site" evidence="1">
    <location>
        <position position="62"/>
    </location>
    <ligand>
        <name>[4Fe-4S] cluster</name>
        <dbReference type="ChEBI" id="CHEBI:49883"/>
    </ligand>
</feature>
<feature type="binding site" evidence="1">
    <location>
        <position position="126"/>
    </location>
    <ligand>
        <name>[4Fe-4S] cluster</name>
        <dbReference type="ChEBI" id="CHEBI:49883"/>
    </ligand>
</feature>
<feature type="binding site" evidence="1">
    <location>
        <position position="157"/>
    </location>
    <ligand>
        <name>[4Fe-4S] cluster</name>
        <dbReference type="ChEBI" id="CHEBI:49883"/>
    </ligand>
</feature>
<reference key="1">
    <citation type="journal article" date="2003" name="Nucleic Acids Res.">
        <title>The complete nucleotide sequence of the hornwort (Anthoceros formosae) chloroplast genome: insight into the earliest land plants.</title>
        <authorList>
            <person name="Kugita M."/>
            <person name="Kaneko A."/>
            <person name="Yamamoto Y."/>
            <person name="Takeya Y."/>
            <person name="Matsumoto T."/>
            <person name="Yoshinaga K."/>
        </authorList>
    </citation>
    <scope>NUCLEOTIDE SEQUENCE [LARGE SCALE GENOMIC DNA]</scope>
    <scope>RNA EDITING</scope>
</reference>
<reference key="2">
    <citation type="journal article" date="2003" name="Nucleic Acids Res.">
        <title>RNA editing in hornwort chloroplasts makes more than half the genes functional.</title>
        <authorList>
            <person name="Kugita M."/>
            <person name="Yamamoto Y."/>
            <person name="Fujikawa T."/>
            <person name="Matsumoto T."/>
            <person name="Yoshinaga K."/>
        </authorList>
    </citation>
    <scope>NUCLEOTIDE SEQUENCE [MRNA]</scope>
    <scope>RNA EDITING</scope>
    <source>
        <tissue>Thallus</tissue>
    </source>
</reference>
<reference key="3">
    <citation type="journal article" date="1996" name="Nucleic Acids Res.">
        <title>Extensive RNA editing of U to C in addition to C to U substitution in the rbcL transcripts of hornwort chloroplasts and the origin of RNA editing in green plants.</title>
        <authorList>
            <person name="Yoshinaga K."/>
            <person name="Iinuma H."/>
            <person name="Masuzawa T."/>
            <person name="Ueda K."/>
        </authorList>
    </citation>
    <scope>NUCLEOTIDE SEQUENCE [GENOMIC DNA] OF 1-80</scope>
    <source>
        <tissue>Thallus</tissue>
    </source>
</reference>
<proteinExistence type="evidence at transcript level"/>
<organism>
    <name type="scientific">Anthoceros angustus</name>
    <name type="common">Hornwort</name>
    <name type="synonym">Anthoceros formosae</name>
    <dbReference type="NCBI Taxonomy" id="48387"/>
    <lineage>
        <taxon>Eukaryota</taxon>
        <taxon>Viridiplantae</taxon>
        <taxon>Streptophyta</taxon>
        <taxon>Embryophyta</taxon>
        <taxon>Anthocerotophyta</taxon>
        <taxon>Anthocerotopsida</taxon>
        <taxon>Anthocerotidae</taxon>
        <taxon>Anthocerotales</taxon>
        <taxon>Anthocerotaceae</taxon>
        <taxon>Anthoceros</taxon>
    </lineage>
</organism>